<protein>
    <recommendedName>
        <fullName>Putative uncharacterized protein YGL182C</fullName>
    </recommendedName>
</protein>
<accession>P53103</accession>
<organism>
    <name type="scientific">Saccharomyces cerevisiae (strain ATCC 204508 / S288c)</name>
    <name type="common">Baker's yeast</name>
    <dbReference type="NCBI Taxonomy" id="559292"/>
    <lineage>
        <taxon>Eukaryota</taxon>
        <taxon>Fungi</taxon>
        <taxon>Dikarya</taxon>
        <taxon>Ascomycota</taxon>
        <taxon>Saccharomycotina</taxon>
        <taxon>Saccharomycetes</taxon>
        <taxon>Saccharomycetales</taxon>
        <taxon>Saccharomycetaceae</taxon>
        <taxon>Saccharomyces</taxon>
    </lineage>
</organism>
<comment type="miscellaneous">
    <text evidence="1">Partially overlaps MND1.</text>
</comment>
<comment type="caution">
    <text evidence="2">Product of a dubious gene prediction unlikely to encode a functional protein. Because of that it is not part of the S.cerevisiae S288c complete/reference proteome set.</text>
</comment>
<reference key="1">
    <citation type="journal article" date="1997" name="Yeast">
        <title>Sequencing of a 40.5 kb fragment located on the left arm of chromosome VII from Saccharomyces cerevisiae.</title>
        <authorList>
            <person name="Coglievina M."/>
            <person name="Klima R."/>
            <person name="Bertani I."/>
            <person name="Delneri D."/>
            <person name="Zaccaria P."/>
            <person name="Bruschi C.V."/>
        </authorList>
    </citation>
    <scope>NUCLEOTIDE SEQUENCE [GENOMIC DNA]</scope>
    <source>
        <strain>ATCC 96604 / S288c / FY1679</strain>
    </source>
</reference>
<reference key="2">
    <citation type="journal article" date="1997" name="Nature">
        <title>The nucleotide sequence of Saccharomyces cerevisiae chromosome VII.</title>
        <authorList>
            <person name="Tettelin H."/>
            <person name="Agostoni-Carbone M.L."/>
            <person name="Albermann K."/>
            <person name="Albers M."/>
            <person name="Arroyo J."/>
            <person name="Backes U."/>
            <person name="Barreiros T."/>
            <person name="Bertani I."/>
            <person name="Bjourson A.J."/>
            <person name="Brueckner M."/>
            <person name="Bruschi C.V."/>
            <person name="Carignani G."/>
            <person name="Castagnoli L."/>
            <person name="Cerdan E."/>
            <person name="Clemente M.L."/>
            <person name="Coblenz A."/>
            <person name="Coglievina M."/>
            <person name="Coissac E."/>
            <person name="Defoor E."/>
            <person name="Del Bino S."/>
            <person name="Delius H."/>
            <person name="Delneri D."/>
            <person name="de Wergifosse P."/>
            <person name="Dujon B."/>
            <person name="Durand P."/>
            <person name="Entian K.-D."/>
            <person name="Eraso P."/>
            <person name="Escribano V."/>
            <person name="Fabiani L."/>
            <person name="Fartmann B."/>
            <person name="Feroli F."/>
            <person name="Feuermann M."/>
            <person name="Frontali L."/>
            <person name="Garcia-Gonzalez M."/>
            <person name="Garcia-Saez M.I."/>
            <person name="Goffeau A."/>
            <person name="Guerreiro P."/>
            <person name="Hani J."/>
            <person name="Hansen M."/>
            <person name="Hebling U."/>
            <person name="Hernandez K."/>
            <person name="Heumann K."/>
            <person name="Hilger F."/>
            <person name="Hofmann B."/>
            <person name="Indge K.J."/>
            <person name="James C.M."/>
            <person name="Klima R."/>
            <person name="Koetter P."/>
            <person name="Kramer B."/>
            <person name="Kramer W."/>
            <person name="Lauquin G."/>
            <person name="Leuther H."/>
            <person name="Louis E.J."/>
            <person name="Maillier E."/>
            <person name="Marconi A."/>
            <person name="Martegani E."/>
            <person name="Mazon M.J."/>
            <person name="Mazzoni C."/>
            <person name="McReynolds A.D.K."/>
            <person name="Melchioretto P."/>
            <person name="Mewes H.-W."/>
            <person name="Minenkova O."/>
            <person name="Mueller-Auer S."/>
            <person name="Nawrocki A."/>
            <person name="Netter P."/>
            <person name="Neu R."/>
            <person name="Nombela C."/>
            <person name="Oliver S.G."/>
            <person name="Panzeri L."/>
            <person name="Paoluzi S."/>
            <person name="Plevani P."/>
            <person name="Portetelle D."/>
            <person name="Portillo F."/>
            <person name="Potier S."/>
            <person name="Purnelle B."/>
            <person name="Rieger M."/>
            <person name="Riles L."/>
            <person name="Rinaldi T."/>
            <person name="Robben J."/>
            <person name="Rodrigues-Pousada C."/>
            <person name="Rodriguez-Belmonte E."/>
            <person name="Rodriguez-Torres A.M."/>
            <person name="Rose M."/>
            <person name="Ruzzi M."/>
            <person name="Saliola M."/>
            <person name="Sanchez-Perez M."/>
            <person name="Schaefer B."/>
            <person name="Schaefer M."/>
            <person name="Scharfe M."/>
            <person name="Schmidheini T."/>
            <person name="Schreer A."/>
            <person name="Skala J."/>
            <person name="Souciet J.-L."/>
            <person name="Steensma H.Y."/>
            <person name="Talla E."/>
            <person name="Thierry A."/>
            <person name="Vandenbol M."/>
            <person name="van der Aart Q.J.M."/>
            <person name="Van Dyck L."/>
            <person name="Vanoni M."/>
            <person name="Verhasselt P."/>
            <person name="Voet M."/>
            <person name="Volckaert G."/>
            <person name="Wambutt R."/>
            <person name="Watson M.D."/>
            <person name="Weber N."/>
            <person name="Wedler E."/>
            <person name="Wedler H."/>
            <person name="Wipfli P."/>
            <person name="Wolf K."/>
            <person name="Wright L.F."/>
            <person name="Zaccaria P."/>
            <person name="Zimmermann M."/>
            <person name="Zollner A."/>
            <person name="Kleine K."/>
        </authorList>
    </citation>
    <scope>NUCLEOTIDE SEQUENCE [LARGE SCALE GENOMIC DNA]</scope>
    <source>
        <strain>ATCC 204508 / S288c</strain>
    </source>
</reference>
<reference key="3">
    <citation type="journal article" date="2014" name="G3 (Bethesda)">
        <title>The reference genome sequence of Saccharomyces cerevisiae: Then and now.</title>
        <authorList>
            <person name="Engel S.R."/>
            <person name="Dietrich F.S."/>
            <person name="Fisk D.G."/>
            <person name="Binkley G."/>
            <person name="Balakrishnan R."/>
            <person name="Costanzo M.C."/>
            <person name="Dwight S.S."/>
            <person name="Hitz B.C."/>
            <person name="Karra K."/>
            <person name="Nash R.S."/>
            <person name="Weng S."/>
            <person name="Wong E.D."/>
            <person name="Lloyd P."/>
            <person name="Skrzypek M.S."/>
            <person name="Miyasato S.R."/>
            <person name="Simison M."/>
            <person name="Cherry J.M."/>
        </authorList>
    </citation>
    <scope>GENOME REANNOTATION</scope>
    <source>
        <strain>ATCC 204508 / S288c</strain>
    </source>
</reference>
<name>YGT2_YEAST</name>
<proteinExistence type="uncertain"/>
<gene>
    <name type="ordered locus">YGL182C</name>
    <name type="ORF">G1607</name>
</gene>
<evidence type="ECO:0000305" key="1"/>
<evidence type="ECO:0000305" key="2">
    <source>
    </source>
</evidence>
<dbReference type="EMBL" id="X91489">
    <property type="protein sequence ID" value="CAA62792.1"/>
    <property type="molecule type" value="Genomic_DNA"/>
</dbReference>
<dbReference type="EMBL" id="Z72704">
    <property type="protein sequence ID" value="CAA96894.1"/>
    <property type="molecule type" value="Genomic_DNA"/>
</dbReference>
<dbReference type="PIR" id="S61135">
    <property type="entry name" value="S61135"/>
</dbReference>
<dbReference type="STRING" id="4932.YGL182C"/>
<dbReference type="PaxDb" id="4932-YGL182C"/>
<dbReference type="EnsemblFungi" id="YGL182C_mRNA">
    <property type="protein sequence ID" value="YGL182C"/>
    <property type="gene ID" value="YGL182C"/>
</dbReference>
<dbReference type="AGR" id="SGD:S000003150"/>
<dbReference type="SGD" id="S000003150">
    <property type="gene designation" value="YGL182C"/>
</dbReference>
<dbReference type="HOGENOM" id="CLU_2212015_0_0_1"/>
<feature type="chain" id="PRO_0000202725" description="Putative uncharacterized protein YGL182C">
    <location>
        <begin position="1"/>
        <end position="107"/>
    </location>
</feature>
<sequence>MFFSSYYDKGNLKKNSCLAIISASSSQPKPLLTKARSNIFLALKILNNEPNLPSFLLFYASKKSKITAQITKLHIKGDLPSHRYSLRYRLNGGNFMCSIINIQQWYV</sequence>